<name>MUTS_STRT2</name>
<keyword id="KW-0067">ATP-binding</keyword>
<keyword id="KW-0227">DNA damage</keyword>
<keyword id="KW-0234">DNA repair</keyword>
<keyword id="KW-0238">DNA-binding</keyword>
<keyword id="KW-0547">Nucleotide-binding</keyword>
<keyword id="KW-1185">Reference proteome</keyword>
<evidence type="ECO:0000255" key="1">
    <source>
        <dbReference type="HAMAP-Rule" id="MF_00096"/>
    </source>
</evidence>
<organism>
    <name type="scientific">Streptococcus thermophilus (strain ATCC BAA-250 / LMG 18311)</name>
    <dbReference type="NCBI Taxonomy" id="264199"/>
    <lineage>
        <taxon>Bacteria</taxon>
        <taxon>Bacillati</taxon>
        <taxon>Bacillota</taxon>
        <taxon>Bacilli</taxon>
        <taxon>Lactobacillales</taxon>
        <taxon>Streptococcaceae</taxon>
        <taxon>Streptococcus</taxon>
    </lineage>
</organism>
<comment type="function">
    <text evidence="1">This protein is involved in the repair of mismatches in DNA. It is possible that it carries out the mismatch recognition step. This protein has a weak ATPase activity.</text>
</comment>
<comment type="similarity">
    <text evidence="1">Belongs to the DNA mismatch repair MutS family.</text>
</comment>
<dbReference type="EMBL" id="CP000023">
    <property type="protein sequence ID" value="AAV59780.1"/>
    <property type="molecule type" value="Genomic_DNA"/>
</dbReference>
<dbReference type="RefSeq" id="WP_011225278.1">
    <property type="nucleotide sequence ID" value="NC_006448.1"/>
</dbReference>
<dbReference type="SMR" id="Q5M6I1"/>
<dbReference type="STRING" id="264199.stu0050"/>
<dbReference type="GeneID" id="66897968"/>
<dbReference type="KEGG" id="stl:stu0050"/>
<dbReference type="PATRIC" id="fig|264199.4.peg.52"/>
<dbReference type="eggNOG" id="COG0249">
    <property type="taxonomic scope" value="Bacteria"/>
</dbReference>
<dbReference type="HOGENOM" id="CLU_002472_3_1_9"/>
<dbReference type="Proteomes" id="UP000001170">
    <property type="component" value="Chromosome"/>
</dbReference>
<dbReference type="GO" id="GO:0005829">
    <property type="term" value="C:cytosol"/>
    <property type="evidence" value="ECO:0007669"/>
    <property type="project" value="TreeGrafter"/>
</dbReference>
<dbReference type="GO" id="GO:0005524">
    <property type="term" value="F:ATP binding"/>
    <property type="evidence" value="ECO:0007669"/>
    <property type="project" value="UniProtKB-UniRule"/>
</dbReference>
<dbReference type="GO" id="GO:0140664">
    <property type="term" value="F:ATP-dependent DNA damage sensor activity"/>
    <property type="evidence" value="ECO:0007669"/>
    <property type="project" value="InterPro"/>
</dbReference>
<dbReference type="GO" id="GO:0003684">
    <property type="term" value="F:damaged DNA binding"/>
    <property type="evidence" value="ECO:0007669"/>
    <property type="project" value="UniProtKB-UniRule"/>
</dbReference>
<dbReference type="GO" id="GO:0030983">
    <property type="term" value="F:mismatched DNA binding"/>
    <property type="evidence" value="ECO:0007669"/>
    <property type="project" value="InterPro"/>
</dbReference>
<dbReference type="GO" id="GO:0006298">
    <property type="term" value="P:mismatch repair"/>
    <property type="evidence" value="ECO:0007669"/>
    <property type="project" value="UniProtKB-UniRule"/>
</dbReference>
<dbReference type="CDD" id="cd03284">
    <property type="entry name" value="ABC_MutS1"/>
    <property type="match status" value="1"/>
</dbReference>
<dbReference type="FunFam" id="1.10.1420.10:FF:000001">
    <property type="entry name" value="DNA mismatch repair protein MutS"/>
    <property type="match status" value="1"/>
</dbReference>
<dbReference type="FunFam" id="3.40.1170.10:FF:000001">
    <property type="entry name" value="DNA mismatch repair protein MutS"/>
    <property type="match status" value="1"/>
</dbReference>
<dbReference type="FunFam" id="3.40.50.300:FF:000896">
    <property type="entry name" value="DNA mismatch repair protein MutS"/>
    <property type="match status" value="1"/>
</dbReference>
<dbReference type="Gene3D" id="1.10.1420.10">
    <property type="match status" value="2"/>
</dbReference>
<dbReference type="Gene3D" id="3.40.1170.10">
    <property type="entry name" value="DNA repair protein MutS, domain I"/>
    <property type="match status" value="1"/>
</dbReference>
<dbReference type="Gene3D" id="3.30.420.110">
    <property type="entry name" value="MutS, connector domain"/>
    <property type="match status" value="1"/>
</dbReference>
<dbReference type="Gene3D" id="3.40.50.300">
    <property type="entry name" value="P-loop containing nucleotide triphosphate hydrolases"/>
    <property type="match status" value="1"/>
</dbReference>
<dbReference type="HAMAP" id="MF_00096">
    <property type="entry name" value="MutS"/>
    <property type="match status" value="1"/>
</dbReference>
<dbReference type="InterPro" id="IPR005748">
    <property type="entry name" value="DNA_mismatch_repair_MutS"/>
</dbReference>
<dbReference type="InterPro" id="IPR007695">
    <property type="entry name" value="DNA_mismatch_repair_MutS-lik_N"/>
</dbReference>
<dbReference type="InterPro" id="IPR017261">
    <property type="entry name" value="DNA_mismatch_repair_MutS/MSH"/>
</dbReference>
<dbReference type="InterPro" id="IPR000432">
    <property type="entry name" value="DNA_mismatch_repair_MutS_C"/>
</dbReference>
<dbReference type="InterPro" id="IPR007861">
    <property type="entry name" value="DNA_mismatch_repair_MutS_clamp"/>
</dbReference>
<dbReference type="InterPro" id="IPR007696">
    <property type="entry name" value="DNA_mismatch_repair_MutS_core"/>
</dbReference>
<dbReference type="InterPro" id="IPR016151">
    <property type="entry name" value="DNA_mismatch_repair_MutS_N"/>
</dbReference>
<dbReference type="InterPro" id="IPR036187">
    <property type="entry name" value="DNA_mismatch_repair_MutS_sf"/>
</dbReference>
<dbReference type="InterPro" id="IPR007860">
    <property type="entry name" value="DNA_mmatch_repair_MutS_con_dom"/>
</dbReference>
<dbReference type="InterPro" id="IPR045076">
    <property type="entry name" value="MutS"/>
</dbReference>
<dbReference type="InterPro" id="IPR036678">
    <property type="entry name" value="MutS_con_dom_sf"/>
</dbReference>
<dbReference type="InterPro" id="IPR027417">
    <property type="entry name" value="P-loop_NTPase"/>
</dbReference>
<dbReference type="NCBIfam" id="TIGR01070">
    <property type="entry name" value="mutS1"/>
    <property type="match status" value="1"/>
</dbReference>
<dbReference type="NCBIfam" id="NF003810">
    <property type="entry name" value="PRK05399.1"/>
    <property type="match status" value="1"/>
</dbReference>
<dbReference type="PANTHER" id="PTHR11361:SF34">
    <property type="entry name" value="DNA MISMATCH REPAIR PROTEIN MSH1, MITOCHONDRIAL"/>
    <property type="match status" value="1"/>
</dbReference>
<dbReference type="PANTHER" id="PTHR11361">
    <property type="entry name" value="DNA MISMATCH REPAIR PROTEIN MUTS FAMILY MEMBER"/>
    <property type="match status" value="1"/>
</dbReference>
<dbReference type="Pfam" id="PF01624">
    <property type="entry name" value="MutS_I"/>
    <property type="match status" value="1"/>
</dbReference>
<dbReference type="Pfam" id="PF05188">
    <property type="entry name" value="MutS_II"/>
    <property type="match status" value="1"/>
</dbReference>
<dbReference type="Pfam" id="PF05192">
    <property type="entry name" value="MutS_III"/>
    <property type="match status" value="1"/>
</dbReference>
<dbReference type="Pfam" id="PF05190">
    <property type="entry name" value="MutS_IV"/>
    <property type="match status" value="1"/>
</dbReference>
<dbReference type="Pfam" id="PF00488">
    <property type="entry name" value="MutS_V"/>
    <property type="match status" value="1"/>
</dbReference>
<dbReference type="PIRSF" id="PIRSF037677">
    <property type="entry name" value="DNA_mis_repair_Msh6"/>
    <property type="match status" value="1"/>
</dbReference>
<dbReference type="SMART" id="SM00534">
    <property type="entry name" value="MUTSac"/>
    <property type="match status" value="1"/>
</dbReference>
<dbReference type="SMART" id="SM00533">
    <property type="entry name" value="MUTSd"/>
    <property type="match status" value="1"/>
</dbReference>
<dbReference type="SUPFAM" id="SSF55271">
    <property type="entry name" value="DNA repair protein MutS, domain I"/>
    <property type="match status" value="1"/>
</dbReference>
<dbReference type="SUPFAM" id="SSF53150">
    <property type="entry name" value="DNA repair protein MutS, domain II"/>
    <property type="match status" value="1"/>
</dbReference>
<dbReference type="SUPFAM" id="SSF48334">
    <property type="entry name" value="DNA repair protein MutS, domain III"/>
    <property type="match status" value="1"/>
</dbReference>
<dbReference type="SUPFAM" id="SSF52540">
    <property type="entry name" value="P-loop containing nucleoside triphosphate hydrolases"/>
    <property type="match status" value="1"/>
</dbReference>
<dbReference type="PROSITE" id="PS00486">
    <property type="entry name" value="DNA_MISMATCH_REPAIR_2"/>
    <property type="match status" value="1"/>
</dbReference>
<proteinExistence type="inferred from homology"/>
<accession>Q5M6I1</accession>
<gene>
    <name evidence="1" type="primary">mutS</name>
    <name type="ordered locus">stu0050</name>
</gene>
<sequence>MAKEKISPGMQQYLDIKKNYPDAFLLFRMGDFYELFYDDAVKAAQILEISLTSRNKNADNPIPMAGVPYHSAQAYIDVLVEMGYKVAIAEQMEDPKQAVGVVKREVVQVITPGTVVDSSKPDSANNFLVAIDKVGSRFGLSYMDVSTGEFFATELDDFSSVCSEIQNLKAREVVVGYDLLETDEQVLVNQLNLLLSKETEGYDDVHLIGNSLTDLESSVASKLLQYVHRTQMRELSHLQKAQHYEIKDYLQMSYATKSSLDLLENARTGKKHGSLFWLLDKTKTAMGMRLLRTWIDRPLVNQASIIERQNIIQVFLDNFFERSDLTESLKGVYDIERLASRVSFGKANPKDLIQLGHTLAQVPVIKAILESFNDDALSGLLQELDALPELESLIRSAIDPDAPATITEGGIIRDGFDETLDKYRKVMSEGTSWIADIEAKEREASGITTLKIDYNRKDGYYFHVTNSNLSLVPDHFFRKATLKNSERFGTAELAKIEGEMLEAREKSSTLEYDIFMRVREQVERYIDRLQSLAKAIATVDVLQSLAVTAETNHYVRPVFNDEHRIAIDRGRHAVVEKVMGVQEYIPNTITFDSQTNIQLITGPNMSGKSTYMRQLALSVVMAQMGAYVPADSVDLPVFDAIYTRIGAADDLISGQSTFMVEMMEANQAIKRATPNSLIIFDELGRGTATYDGMALAQSIIEFIHDKVGAKTMFATHYHELTALSNSLTHLVNVHVATLEKDGEVTFLHKIVDGPADKSYGIHVAKIAGLPTDLLNRADTILTQLEGETVVIQPQEKVLSQEKPAIETHVNEQISLFDDFTENPVLQELRDLDIYNMTPMQVMMAVADLKQKL</sequence>
<feature type="chain" id="PRO_0000224411" description="DNA mismatch repair protein MutS">
    <location>
        <begin position="1"/>
        <end position="852"/>
    </location>
</feature>
<feature type="binding site" evidence="1">
    <location>
        <begin position="602"/>
        <end position="609"/>
    </location>
    <ligand>
        <name>ATP</name>
        <dbReference type="ChEBI" id="CHEBI:30616"/>
    </ligand>
</feature>
<reference key="1">
    <citation type="journal article" date="2004" name="Nat. Biotechnol.">
        <title>Complete sequence and comparative genome analysis of the dairy bacterium Streptococcus thermophilus.</title>
        <authorList>
            <person name="Bolotin A."/>
            <person name="Quinquis B."/>
            <person name="Renault P."/>
            <person name="Sorokin A."/>
            <person name="Ehrlich S.D."/>
            <person name="Kulakauskas S."/>
            <person name="Lapidus A."/>
            <person name="Goltsman E."/>
            <person name="Mazur M."/>
            <person name="Pusch G.D."/>
            <person name="Fonstein M."/>
            <person name="Overbeek R."/>
            <person name="Kyprides N."/>
            <person name="Purnelle B."/>
            <person name="Prozzi D."/>
            <person name="Ngui K."/>
            <person name="Masuy D."/>
            <person name="Hancy F."/>
            <person name="Burteau S."/>
            <person name="Boutry M."/>
            <person name="Delcour J."/>
            <person name="Goffeau A."/>
            <person name="Hols P."/>
        </authorList>
    </citation>
    <scope>NUCLEOTIDE SEQUENCE [LARGE SCALE GENOMIC DNA]</scope>
    <source>
        <strain>ATCC BAA-250 / LMG 18311</strain>
    </source>
</reference>
<protein>
    <recommendedName>
        <fullName evidence="1">DNA mismatch repair protein MutS</fullName>
    </recommendedName>
</protein>